<reference key="1">
    <citation type="journal article" date="2000" name="Nucleic Acids Res.">
        <title>An ATM homologue from Arabidopsis thaliana: complete genomic organisation and expression analysis.</title>
        <authorList>
            <person name="Garcia V."/>
            <person name="Salanoubat M."/>
            <person name="Choisne N."/>
            <person name="Tissier A."/>
        </authorList>
    </citation>
    <scope>NUCLEOTIDE SEQUENCE [MRNA]</scope>
    <scope>TISSUE SPECIFICITY</scope>
    <source>
        <strain>cv. Columbia</strain>
    </source>
</reference>
<reference key="2">
    <citation type="journal article" date="2000" name="Nature">
        <title>Sequence and analysis of chromosome 3 of the plant Arabidopsis thaliana.</title>
        <authorList>
            <person name="Salanoubat M."/>
            <person name="Lemcke K."/>
            <person name="Rieger M."/>
            <person name="Ansorge W."/>
            <person name="Unseld M."/>
            <person name="Fartmann B."/>
            <person name="Valle G."/>
            <person name="Bloecker H."/>
            <person name="Perez-Alonso M."/>
            <person name="Obermaier B."/>
            <person name="Delseny M."/>
            <person name="Boutry M."/>
            <person name="Grivell L.A."/>
            <person name="Mache R."/>
            <person name="Puigdomenech P."/>
            <person name="De Simone V."/>
            <person name="Choisne N."/>
            <person name="Artiguenave F."/>
            <person name="Robert C."/>
            <person name="Brottier P."/>
            <person name="Wincker P."/>
            <person name="Cattolico L."/>
            <person name="Weissenbach J."/>
            <person name="Saurin W."/>
            <person name="Quetier F."/>
            <person name="Schaefer M."/>
            <person name="Mueller-Auer S."/>
            <person name="Gabel C."/>
            <person name="Fuchs M."/>
            <person name="Benes V."/>
            <person name="Wurmbach E."/>
            <person name="Drzonek H."/>
            <person name="Erfle H."/>
            <person name="Jordan N."/>
            <person name="Bangert S."/>
            <person name="Wiedelmann R."/>
            <person name="Kranz H."/>
            <person name="Voss H."/>
            <person name="Holland R."/>
            <person name="Brandt P."/>
            <person name="Nyakatura G."/>
            <person name="Vezzi A."/>
            <person name="D'Angelo M."/>
            <person name="Pallavicini A."/>
            <person name="Toppo S."/>
            <person name="Simionati B."/>
            <person name="Conrad A."/>
            <person name="Hornischer K."/>
            <person name="Kauer G."/>
            <person name="Loehnert T.-H."/>
            <person name="Nordsiek G."/>
            <person name="Reichelt J."/>
            <person name="Scharfe M."/>
            <person name="Schoen O."/>
            <person name="Bargues M."/>
            <person name="Terol J."/>
            <person name="Climent J."/>
            <person name="Navarro P."/>
            <person name="Collado C."/>
            <person name="Perez-Perez A."/>
            <person name="Ottenwaelder B."/>
            <person name="Duchemin D."/>
            <person name="Cooke R."/>
            <person name="Laudie M."/>
            <person name="Berger-Llauro C."/>
            <person name="Purnelle B."/>
            <person name="Masuy D."/>
            <person name="de Haan M."/>
            <person name="Maarse A.C."/>
            <person name="Alcaraz J.-P."/>
            <person name="Cottet A."/>
            <person name="Casacuberta E."/>
            <person name="Monfort A."/>
            <person name="Argiriou A."/>
            <person name="Flores M."/>
            <person name="Liguori R."/>
            <person name="Vitale D."/>
            <person name="Mannhaupt G."/>
            <person name="Haase D."/>
            <person name="Schoof H."/>
            <person name="Rudd S."/>
            <person name="Zaccaria P."/>
            <person name="Mewes H.-W."/>
            <person name="Mayer K.F.X."/>
            <person name="Kaul S."/>
            <person name="Town C.D."/>
            <person name="Koo H.L."/>
            <person name="Tallon L.J."/>
            <person name="Jenkins J."/>
            <person name="Rooney T."/>
            <person name="Rizzo M."/>
            <person name="Walts A."/>
            <person name="Utterback T."/>
            <person name="Fujii C.Y."/>
            <person name="Shea T.P."/>
            <person name="Creasy T.H."/>
            <person name="Haas B."/>
            <person name="Maiti R."/>
            <person name="Wu D."/>
            <person name="Peterson J."/>
            <person name="Van Aken S."/>
            <person name="Pai G."/>
            <person name="Militscher J."/>
            <person name="Sellers P."/>
            <person name="Gill J.E."/>
            <person name="Feldblyum T.V."/>
            <person name="Preuss D."/>
            <person name="Lin X."/>
            <person name="Nierman W.C."/>
            <person name="Salzberg S.L."/>
            <person name="White O."/>
            <person name="Venter J.C."/>
            <person name="Fraser C.M."/>
            <person name="Kaneko T."/>
            <person name="Nakamura Y."/>
            <person name="Sato S."/>
            <person name="Kato T."/>
            <person name="Asamizu E."/>
            <person name="Sasamoto S."/>
            <person name="Kimura T."/>
            <person name="Idesawa K."/>
            <person name="Kawashima K."/>
            <person name="Kishida Y."/>
            <person name="Kiyokawa C."/>
            <person name="Kohara M."/>
            <person name="Matsumoto M."/>
            <person name="Matsuno A."/>
            <person name="Muraki A."/>
            <person name="Nakayama S."/>
            <person name="Nakazaki N."/>
            <person name="Shinpo S."/>
            <person name="Takeuchi C."/>
            <person name="Wada T."/>
            <person name="Watanabe A."/>
            <person name="Yamada M."/>
            <person name="Yasuda M."/>
            <person name="Tabata S."/>
        </authorList>
    </citation>
    <scope>NUCLEOTIDE SEQUENCE [LARGE SCALE GENOMIC DNA]</scope>
    <source>
        <strain>cv. Columbia</strain>
    </source>
</reference>
<reference key="3">
    <citation type="journal article" date="2017" name="Plant J.">
        <title>Araport11: a complete reannotation of the Arabidopsis thaliana reference genome.</title>
        <authorList>
            <person name="Cheng C.Y."/>
            <person name="Krishnakumar V."/>
            <person name="Chan A.P."/>
            <person name="Thibaud-Nissen F."/>
            <person name="Schobel S."/>
            <person name="Town C.D."/>
        </authorList>
    </citation>
    <scope>GENOME REANNOTATION</scope>
    <source>
        <strain>cv. Columbia</strain>
    </source>
</reference>
<reference key="4">
    <citation type="journal article" date="2003" name="Plant Cell">
        <title>AtATM is essential for meiosis and the somatic response to DNA damage in plants.</title>
        <authorList>
            <person name="Garcia V."/>
            <person name="Bruchet H."/>
            <person name="Camescasse D."/>
            <person name="Granier F."/>
            <person name="Bouchez D."/>
            <person name="Tissier A."/>
        </authorList>
    </citation>
    <scope>FUNCTION</scope>
    <scope>DISRUPTION PHENOTYPE</scope>
</reference>
<reference key="5">
    <citation type="journal article" date="2005" name="Genes Dev.">
        <title>ATM and ATR make distinct contributions to chromosome end protection and the maintenance of telomeric DNA in Arabidopsis.</title>
        <authorList>
            <person name="Vespa L."/>
            <person name="Couvillion M."/>
            <person name="Spangler E."/>
            <person name="Shippen D.E."/>
        </authorList>
    </citation>
    <scope>FUNCTION</scope>
</reference>
<reference key="6">
    <citation type="journal article" date="2005" name="Mol. Biol. Cell">
        <title>Ionizing radiation-dependent gamma-H2AX focus formation requires ataxia telangiectasia mutated and ataxia telangiectasia mutated and Rad3-related.</title>
        <authorList>
            <person name="Friesner J.D."/>
            <person name="Liu B."/>
            <person name="Culligan K."/>
            <person name="Britt A.B."/>
        </authorList>
    </citation>
    <scope>FUNCTION</scope>
</reference>
<reference key="7">
    <citation type="journal article" date="2017" name="Sci. Rep.">
        <title>RUG3 and ATM synergistically regulate the alternative splicing of mitochondrial nad2 and the DNA damage response in Arabidopsis thaliana.</title>
        <authorList>
            <person name="Su C."/>
            <person name="Zhao H."/>
            <person name="Zhao Y."/>
            <person name="Ji H."/>
            <person name="Wang Y."/>
            <person name="Zhi L."/>
            <person name="Li X."/>
        </authorList>
    </citation>
    <scope>FUNCTION</scope>
    <scope>INTERACTION WITH RUG3</scope>
    <scope>DISRUPTION PHENOTYPE</scope>
    <source>
        <strain>cv. Columbia</strain>
    </source>
</reference>
<accession>Q9M3G7</accession>
<accession>F4JDV3</accession>
<accession>Q9M4D7</accession>
<feature type="chain" id="PRO_0000088843" description="Serine/threonine-protein kinase ATM">
    <location>
        <begin position="1"/>
        <end position="3856"/>
    </location>
</feature>
<feature type="domain" description="PWWP" evidence="2">
    <location>
        <begin position="108"/>
        <end position="162"/>
    </location>
</feature>
<feature type="domain" description="FAT" evidence="4">
    <location>
        <begin position="2727"/>
        <end position="3393"/>
    </location>
</feature>
<feature type="domain" description="PI3K/PI4K catalytic" evidence="3">
    <location>
        <begin position="3499"/>
        <end position="3811"/>
    </location>
</feature>
<feature type="domain" description="FATC" evidence="4 5">
    <location>
        <begin position="3824"/>
        <end position="3856"/>
    </location>
</feature>
<feature type="region of interest" description="Disordered" evidence="6">
    <location>
        <begin position="648"/>
        <end position="681"/>
    </location>
</feature>
<feature type="region of interest" description="G-loop" evidence="3">
    <location>
        <begin position="3505"/>
        <end position="3511"/>
    </location>
</feature>
<feature type="region of interest" description="Catalytic loop" evidence="3">
    <location>
        <begin position="3678"/>
        <end position="3686"/>
    </location>
</feature>
<feature type="region of interest" description="Activation loop" evidence="3">
    <location>
        <begin position="3698"/>
        <end position="3722"/>
    </location>
</feature>
<feature type="short sequence motif" description="Bipartite nuclear localization signal" evidence="1">
    <location>
        <begin position="3233"/>
        <end position="3249"/>
    </location>
</feature>
<feature type="sequence conflict" description="In Ref. 1; CAB86487." evidence="13" ref="1">
    <original>P</original>
    <variation>S</variation>
    <location>
        <position position="3640"/>
    </location>
</feature>
<gene>
    <name evidence="12" type="primary">ATM</name>
    <name evidence="14" type="ordered locus">At3g48190</name>
    <name evidence="15" type="ORF">T24C20.70</name>
</gene>
<evidence type="ECO:0000255" key="1"/>
<evidence type="ECO:0000255" key="2">
    <source>
        <dbReference type="PROSITE-ProRule" id="PRU00162"/>
    </source>
</evidence>
<evidence type="ECO:0000255" key="3">
    <source>
        <dbReference type="PROSITE-ProRule" id="PRU00269"/>
    </source>
</evidence>
<evidence type="ECO:0000255" key="4">
    <source>
        <dbReference type="PROSITE-ProRule" id="PRU00534"/>
    </source>
</evidence>
<evidence type="ECO:0000255" key="5">
    <source>
        <dbReference type="PROSITE-ProRule" id="PRU00535"/>
    </source>
</evidence>
<evidence type="ECO:0000256" key="6">
    <source>
        <dbReference type="SAM" id="MobiDB-lite"/>
    </source>
</evidence>
<evidence type="ECO:0000269" key="7">
    <source>
    </source>
</evidence>
<evidence type="ECO:0000269" key="8">
    <source>
    </source>
</evidence>
<evidence type="ECO:0000269" key="9">
    <source>
    </source>
</evidence>
<evidence type="ECO:0000269" key="10">
    <source>
    </source>
</evidence>
<evidence type="ECO:0000269" key="11">
    <source>
    </source>
</evidence>
<evidence type="ECO:0000303" key="12">
    <source>
    </source>
</evidence>
<evidence type="ECO:0000305" key="13"/>
<evidence type="ECO:0000312" key="14">
    <source>
        <dbReference type="Araport" id="AT3G48190"/>
    </source>
</evidence>
<evidence type="ECO:0000312" key="15">
    <source>
        <dbReference type="EMBL" id="CAB92122.1"/>
    </source>
</evidence>
<comment type="function">
    <text evidence="8 9 10 11">Serine/threonine protein kinase which activates checkpoint signaling upon genotoxic stresses such as ionizing radiation (IR) or DNA replication stalling. Plays a central role in the perception and response to both stress-induced damage in somatic cells and developmentally programmed DNA damage during meiosis. Recognizes the substrate consensus sequence [ST]-Q. Phosphorylates histone variant H2AX to form H2AXS139ph at double strand breaks (DSBs), thereby regulating DNA damage response mechanism. Involved in transcriptional regulation of RAD51, PARP1, GR1, and LIG4 in response to DNA double strand breaks. Plays a dual role by activating the DNA damage response at dysfunctional telomeres and yet preventing this activation at functional telomeres. Not required for telomere length homeostasis. Regulates DNA damage response (DDR) synergistically with RUG3. Together with RUG3, involved in the splicing of the ND2/NAD2 mRNA (PubMed:28262819).</text>
</comment>
<comment type="catalytic activity">
    <reaction>
        <text>L-seryl-[protein] + ATP = O-phospho-L-seryl-[protein] + ADP + H(+)</text>
        <dbReference type="Rhea" id="RHEA:17989"/>
        <dbReference type="Rhea" id="RHEA-COMP:9863"/>
        <dbReference type="Rhea" id="RHEA-COMP:11604"/>
        <dbReference type="ChEBI" id="CHEBI:15378"/>
        <dbReference type="ChEBI" id="CHEBI:29999"/>
        <dbReference type="ChEBI" id="CHEBI:30616"/>
        <dbReference type="ChEBI" id="CHEBI:83421"/>
        <dbReference type="ChEBI" id="CHEBI:456216"/>
        <dbReference type="EC" id="2.7.11.1"/>
    </reaction>
</comment>
<comment type="catalytic activity">
    <reaction>
        <text>L-threonyl-[protein] + ATP = O-phospho-L-threonyl-[protein] + ADP + H(+)</text>
        <dbReference type="Rhea" id="RHEA:46608"/>
        <dbReference type="Rhea" id="RHEA-COMP:11060"/>
        <dbReference type="Rhea" id="RHEA-COMP:11605"/>
        <dbReference type="ChEBI" id="CHEBI:15378"/>
        <dbReference type="ChEBI" id="CHEBI:30013"/>
        <dbReference type="ChEBI" id="CHEBI:30616"/>
        <dbReference type="ChEBI" id="CHEBI:61977"/>
        <dbReference type="ChEBI" id="CHEBI:456216"/>
        <dbReference type="EC" id="2.7.11.1"/>
    </reaction>
</comment>
<comment type="subunit">
    <text evidence="11">Interacts with RUG3.</text>
</comment>
<comment type="subcellular location">
    <subcellularLocation>
        <location evidence="13">Nucleus</location>
    </subcellularLocation>
</comment>
<comment type="tissue specificity">
    <text evidence="7">Ubiquitously expressed at low levels with slightly higher levels in flower buds.</text>
</comment>
<comment type="disruption phenotype">
    <text evidence="8 11">Plants show meiotic defects, hypersensitivity to double strand breaks-inducing agents, and an inability to properly induce IR-mediated transcription of several DNA repair genes. Augmented DNA damage response (DDR) associated with increased intracellular reactive oxygen species (ROS) levels in response to methyl methanesulfonate (MMS) treatment (PubMed:28262819).</text>
</comment>
<comment type="similarity">
    <text evidence="13">Belongs to the PI3/PI4-kinase family.</text>
</comment>
<name>ATM_ARATH</name>
<proteinExistence type="evidence at protein level"/>
<protein>
    <recommendedName>
        <fullName evidence="12">Serine/threonine-protein kinase ATM</fullName>
        <ecNumber>2.7.11.1</ecNumber>
    </recommendedName>
    <alternativeName>
        <fullName evidence="12">Ataxia telangiectasia mutated homolog</fullName>
        <shortName evidence="12">AtATM</shortName>
    </alternativeName>
</protein>
<dbReference type="EC" id="2.7.11.1"/>
<dbReference type="EMBL" id="AJ250248">
    <property type="protein sequence ID" value="CAB86487.1"/>
    <property type="molecule type" value="mRNA"/>
</dbReference>
<dbReference type="EMBL" id="AL096856">
    <property type="protein sequence ID" value="CAB92122.1"/>
    <property type="molecule type" value="Genomic_DNA"/>
</dbReference>
<dbReference type="EMBL" id="CP002686">
    <property type="status" value="NOT_ANNOTATED_CDS"/>
    <property type="molecule type" value="Genomic_DNA"/>
</dbReference>
<dbReference type="PIR" id="T51174">
    <property type="entry name" value="T51174"/>
</dbReference>
<dbReference type="SMR" id="Q9M3G7"/>
<dbReference type="BioGRID" id="9294">
    <property type="interactions" value="2"/>
</dbReference>
<dbReference type="FunCoup" id="Q9M3G7">
    <property type="interactions" value="739"/>
</dbReference>
<dbReference type="STRING" id="3702.Q9M3G7"/>
<dbReference type="PaxDb" id="3702-AT3G48190.1"/>
<dbReference type="ProteomicsDB" id="246584"/>
<dbReference type="Araport" id="AT3G48190"/>
<dbReference type="TAIR" id="AT3G48190">
    <property type="gene designation" value="ATM"/>
</dbReference>
<dbReference type="eggNOG" id="KOG0892">
    <property type="taxonomic scope" value="Eukaryota"/>
</dbReference>
<dbReference type="HOGENOM" id="CLU_000201_1_0_1"/>
<dbReference type="InParanoid" id="Q9M3G7"/>
<dbReference type="PhylomeDB" id="Q9M3G7"/>
<dbReference type="BioCyc" id="ARA:AT3G48190-MONOMER"/>
<dbReference type="PRO" id="PR:Q9M3G7"/>
<dbReference type="Proteomes" id="UP000006548">
    <property type="component" value="Chromosome 3"/>
</dbReference>
<dbReference type="ExpressionAtlas" id="Q9M3G7">
    <property type="expression patterns" value="baseline and differential"/>
</dbReference>
<dbReference type="GO" id="GO:0005634">
    <property type="term" value="C:nucleus"/>
    <property type="evidence" value="ECO:0007669"/>
    <property type="project" value="UniProtKB-SubCell"/>
</dbReference>
<dbReference type="GO" id="GO:0005524">
    <property type="term" value="F:ATP binding"/>
    <property type="evidence" value="ECO:0007669"/>
    <property type="project" value="UniProtKB-KW"/>
</dbReference>
<dbReference type="GO" id="GO:0003677">
    <property type="term" value="F:DNA binding"/>
    <property type="evidence" value="ECO:0007669"/>
    <property type="project" value="UniProtKB-KW"/>
</dbReference>
<dbReference type="GO" id="GO:0106310">
    <property type="term" value="F:protein serine kinase activity"/>
    <property type="evidence" value="ECO:0007669"/>
    <property type="project" value="RHEA"/>
</dbReference>
<dbReference type="GO" id="GO:0004674">
    <property type="term" value="F:protein serine/threonine kinase activity"/>
    <property type="evidence" value="ECO:0007669"/>
    <property type="project" value="UniProtKB-KW"/>
</dbReference>
<dbReference type="GO" id="GO:0006974">
    <property type="term" value="P:DNA damage response"/>
    <property type="evidence" value="ECO:0000315"/>
    <property type="project" value="UniProtKB"/>
</dbReference>
<dbReference type="GO" id="GO:0006281">
    <property type="term" value="P:DNA repair"/>
    <property type="evidence" value="ECO:0007669"/>
    <property type="project" value="InterPro"/>
</dbReference>
<dbReference type="GO" id="GO:0051321">
    <property type="term" value="P:meiotic cell cycle"/>
    <property type="evidence" value="ECO:0007669"/>
    <property type="project" value="UniProtKB-KW"/>
</dbReference>
<dbReference type="GO" id="GO:0008380">
    <property type="term" value="P:RNA splicing"/>
    <property type="evidence" value="ECO:0000315"/>
    <property type="project" value="UniProtKB"/>
</dbReference>
<dbReference type="CDD" id="cd05171">
    <property type="entry name" value="PIKKc_ATM"/>
    <property type="match status" value="1"/>
</dbReference>
<dbReference type="CDD" id="cd05162">
    <property type="entry name" value="PWWP"/>
    <property type="match status" value="1"/>
</dbReference>
<dbReference type="FunFam" id="1.10.1070.11:FF:000015">
    <property type="entry name" value="Serine/threonine-protein kinase ATM"/>
    <property type="match status" value="1"/>
</dbReference>
<dbReference type="FunFam" id="3.30.1010.10:FF:000023">
    <property type="entry name" value="Serine/threonine-protein kinase ATM"/>
    <property type="match status" value="1"/>
</dbReference>
<dbReference type="Gene3D" id="2.30.30.140">
    <property type="match status" value="1"/>
</dbReference>
<dbReference type="Gene3D" id="1.10.1070.11">
    <property type="entry name" value="Phosphatidylinositol 3-/4-kinase, catalytic domain"/>
    <property type="match status" value="1"/>
</dbReference>
<dbReference type="Gene3D" id="3.30.1010.10">
    <property type="entry name" value="Phosphatidylinositol 3-kinase Catalytic Subunit, Chain A, domain 4"/>
    <property type="match status" value="1"/>
</dbReference>
<dbReference type="InterPro" id="IPR016024">
    <property type="entry name" value="ARM-type_fold"/>
</dbReference>
<dbReference type="InterPro" id="IPR038980">
    <property type="entry name" value="ATM_plant"/>
</dbReference>
<dbReference type="InterPro" id="IPR003152">
    <property type="entry name" value="FATC_dom"/>
</dbReference>
<dbReference type="InterPro" id="IPR011009">
    <property type="entry name" value="Kinase-like_dom_sf"/>
</dbReference>
<dbReference type="InterPro" id="IPR000403">
    <property type="entry name" value="PI3/4_kinase_cat_dom"/>
</dbReference>
<dbReference type="InterPro" id="IPR036940">
    <property type="entry name" value="PI3/4_kinase_cat_sf"/>
</dbReference>
<dbReference type="InterPro" id="IPR018936">
    <property type="entry name" value="PI3/4_kinase_CS"/>
</dbReference>
<dbReference type="InterPro" id="IPR003151">
    <property type="entry name" value="PIK-rel_kinase_FAT"/>
</dbReference>
<dbReference type="InterPro" id="IPR014009">
    <property type="entry name" value="PIK_FAT"/>
</dbReference>
<dbReference type="InterPro" id="IPR044107">
    <property type="entry name" value="PIKKc_ATM"/>
</dbReference>
<dbReference type="InterPro" id="IPR000313">
    <property type="entry name" value="PWWP_dom"/>
</dbReference>
<dbReference type="PANTHER" id="PTHR37079">
    <property type="entry name" value="SERINE/THREONINE-PROTEIN KINASE ATM"/>
    <property type="match status" value="1"/>
</dbReference>
<dbReference type="PANTHER" id="PTHR37079:SF4">
    <property type="entry name" value="SERINE_THREONINE-PROTEIN KINASE ATM"/>
    <property type="match status" value="1"/>
</dbReference>
<dbReference type="Pfam" id="PF02259">
    <property type="entry name" value="FAT"/>
    <property type="match status" value="1"/>
</dbReference>
<dbReference type="Pfam" id="PF02260">
    <property type="entry name" value="FATC"/>
    <property type="match status" value="1"/>
</dbReference>
<dbReference type="Pfam" id="PF00454">
    <property type="entry name" value="PI3_PI4_kinase"/>
    <property type="match status" value="1"/>
</dbReference>
<dbReference type="Pfam" id="PF00855">
    <property type="entry name" value="PWWP"/>
    <property type="match status" value="1"/>
</dbReference>
<dbReference type="Pfam" id="PF25360">
    <property type="entry name" value="TPR_ATM"/>
    <property type="match status" value="1"/>
</dbReference>
<dbReference type="SMART" id="SM01343">
    <property type="entry name" value="FATC"/>
    <property type="match status" value="1"/>
</dbReference>
<dbReference type="SMART" id="SM00146">
    <property type="entry name" value="PI3Kc"/>
    <property type="match status" value="1"/>
</dbReference>
<dbReference type="SUPFAM" id="SSF48371">
    <property type="entry name" value="ARM repeat"/>
    <property type="match status" value="2"/>
</dbReference>
<dbReference type="SUPFAM" id="SSF56112">
    <property type="entry name" value="Protein kinase-like (PK-like)"/>
    <property type="match status" value="1"/>
</dbReference>
<dbReference type="SUPFAM" id="SSF63748">
    <property type="entry name" value="Tudor/PWWP/MBT"/>
    <property type="match status" value="1"/>
</dbReference>
<dbReference type="PROSITE" id="PS51189">
    <property type="entry name" value="FAT"/>
    <property type="match status" value="1"/>
</dbReference>
<dbReference type="PROSITE" id="PS51190">
    <property type="entry name" value="FATC"/>
    <property type="match status" value="1"/>
</dbReference>
<dbReference type="PROSITE" id="PS00915">
    <property type="entry name" value="PI3_4_KINASE_1"/>
    <property type="match status" value="1"/>
</dbReference>
<dbReference type="PROSITE" id="PS00916">
    <property type="entry name" value="PI3_4_KINASE_2"/>
    <property type="match status" value="1"/>
</dbReference>
<dbReference type="PROSITE" id="PS50290">
    <property type="entry name" value="PI3_4_KINASE_3"/>
    <property type="match status" value="1"/>
</dbReference>
<dbReference type="PROSITE" id="PS50812">
    <property type="entry name" value="PWWP"/>
    <property type="match status" value="1"/>
</dbReference>
<organism>
    <name type="scientific">Arabidopsis thaliana</name>
    <name type="common">Mouse-ear cress</name>
    <dbReference type="NCBI Taxonomy" id="3702"/>
    <lineage>
        <taxon>Eukaryota</taxon>
        <taxon>Viridiplantae</taxon>
        <taxon>Streptophyta</taxon>
        <taxon>Embryophyta</taxon>
        <taxon>Tracheophyta</taxon>
        <taxon>Spermatophyta</taxon>
        <taxon>Magnoliopsida</taxon>
        <taxon>eudicotyledons</taxon>
        <taxon>Gunneridae</taxon>
        <taxon>Pentapetalae</taxon>
        <taxon>rosids</taxon>
        <taxon>malvids</taxon>
        <taxon>Brassicales</taxon>
        <taxon>Brassicaceae</taxon>
        <taxon>Camelineae</taxon>
        <taxon>Arabidopsis</taxon>
    </lineage>
</organism>
<sequence>MKLQNPDKKTLREGFSQESSVVALDSGVLAMSGLKCDGKFPVKDVLMEEGGDKVRKIQVSGGNISLVVDFSGARTSSNNFFESNASCVNENLVKGNGYREDETQEFLVGNLVWVMTKYKKWWPGEVVDFKADAKESFMVRSIGQSHLVSWFASSKLKPFKESFEQVLNQRNDNGFFDALQKAMSLLSNSLKLDMTCSCIADGNGIVSAQNITTRKNKPLILREFSVDRLEPKEFVTQLKNIAKCVLNAGVLESTVMQSQLSAFYTLFGHKQIPMAQLHENEGRKSFTAKMSDSKFIGSPSICAGNSRKRFRKEWFRKFVSEVDNVSARDDLVNVPPSDLISKLKLLAVGYNCSEETENIGLFEWFFSKFRISVYHDENAYKMQLANMAGFKDLMLATNANRGTVQKTLKSKKIGKSKMEPLNGVSVADTEQKTFELQISKKSNIESLNGVSVADTEQKTFELQILEKSNIESLNGVSTPNIDHEASKSNNSGKTKINHIIGHSNFPSSVAKVQLAKDFQDKLLVQAPDRKAMTADTLSRPAAILVPDLNSGGNALGTAEFDHMQRPETLIQHNVCPQEEKTPRSTILNFQVTAHQGVSGTQFVSSQPTSYKHFTSADLFTYSGKKKRGRKRKNAEELPIVAHASATTGIPDLNGTNTEPTLVLPQVEPTQRRRRRKKEESPNGLTRGITILFLKFSSQVSMPSRDDLTSTFSAFGPLDSSETHVSEEFSGAQVAFVSSADAIEAVKSLEKANPFGETLVNFRLQQKLITVQRNIAPRMPVISHVSPVPKPNNIPTSMDAMRQNLLMMTAMLEKSGDSLSRETKAKLKSEITGLLEKDGVKLLNTWLEGERSITFCRFLSQNTAKLKLDEIPNAETWPFLVKLLLQCVSMEVSGSKRRMPKPTFAKTLRVVVQRTEETKFPGVQFPLLSMAKTLFTHVHDILSNTPSFQSEYGTILRHLLEIKEYRFQMRKRTYSSLVLLYMERAETGFCEKNSGQHSQKEEAFRYILTLQSLLENSPGDFPDDLREEIVNGLIHIFSSVRDEGKLSRKLIECVNTFLLKDGPNLGSLSLEIHNAVEQFVFRCWLTTHDKNLKEILVSYGRLQLNLTRDSSESSSLVEQLLDVVTRELDLGSSSSSASWGDTTKDEKLGALSSYQNSLVELAAHVFYRACVNTSRPSLSEKRARRQHIAMRMVDALTEGKWLWCAAFGCLVRNYCARINMDLLIYWFEAICTNFQRLLEDASMRRSYDGLLWTLRSLQGLSSGLSLPDITMDISKSSASSSELDRGWQSIWSSLIHGLATFSSMSVIVDAVLVLLGSIISSNHITVKILPQEVWDHQLFRHIPSEPALYFIACYFSRMGCQGNLQDDLHLRRNLLRAVCAPLSWKVRLTLDERMVQLLPAAAFSLCAGFKVSLPLPKEHLPTPSQWDVCEQIDDVDRERNFGLFECSVEALTRICSNSSKISGCQVPDVVQLPLVLRDPLLHDMDIYFLSIIPEVKEKGPLSDIFMGCALLCHFMHGSYITRKGKGSSSFFLKACQYLLEGLDHAVESVSKSLNDLQRRGSLGFGSDFNEKGSIIVSLRSFTQSPVFSNRRDQNLLGASYDFVIHSLENLLRSFAKVYEEYTEHAWNTHSDTVPSKSLAPDSPEVGRIVDMDLDLAEDTKERDIIAAGGKAVPGLPVSMGNWKLGMVSLISCFSPVLQFPTWDVLYNLLEKESDPKVLENILYHLCKLSCLTSIPKVDDLVIFLDGMLSTQVKMKRNCLNIVTALHVLLHTLSSSRRDSSGVEKNCGLSLKEAESFQVFVQLGAMVNKVSEFGLLGWFGRVKLINCICDLVLLNPQTGQTMIERLLLMLSDSDYRVRFVLARQIGILFQTWDGHEALFQDICSSFGIKLVTSSKEKLVTAKDVLAVGPQPRQKMETVIITLMHLAYHSENIELQAVFMMCAVSAKDPCQRELIIAALDNLSAQLHYPSRFKYLEELLGPILFHWIASGVSLAGLIETSQLFIPNAEPKYFIHFCSHWLLPALLLHEDHTNLDWVAKMAGQPVVVLVKENFVPIFSICMGLHCSKTSECDKGAMVLQNSILYVGETSENERDKLIKQNMVSIVSFILSCASSSPEPPVPTFSRDTISLAVQTVVDGFLENTDYPKNAAITDRINIFRPDRVFMFITEMHYRMSAACHHRHTRHHLAALEELTILLGHRALVPSSLNYIFNLVGQFIGYPSLQDQCCSIASCLLDLFKSNPAKEIVSVLGDQLQFLVSKLVTCCIDAEADTKISGAKSSQLVNLLHKLVVSSDSSLNEDIRDLEPLPDLKYFQVIRESHIRICEAYSPRNHLLKVEHSTFLIYIFLEILSLSNFLFLSCSTIQQCSRRSNYLPPRFLSRSLQALHNKLIASEVSQEDTNGETAETFWQSDDEIVNAVWTLVRVSASDEADSMRLLVSDFLSRIGIRDPHTVVFHLPGNLVSMHGLQGFGHNTGSKVRSLTENGISDETLITLLNFLKKYLLDDSVKIIDVTSQTLRGILSTERGQQALSSFDSCERALIEVHGRGVNLDIVEKILLDSQKQFKAEKFSLETPEVWSTDNKNFDRWICQLVYCMIALCEDVPIRLCQNIALLKAEISELLFPSVVVSLAGRIGMDINLHDLITSQVKEHIFTDSNKLTKSKQVMLNTLNELRMCYVLERSIFSGQTKREKNSRSCSTAAKIRDVESGSNGMAASITTNWEKVYWLSIDYLVVAGSAVVCGAYLTASMYVEYWCEEKFGNLSLGDPDFSYHDKLPDHVEILVSAITRINEPDSLYGVIHSNKLSAQIITFEHEGNWTRALEYYDLQARSQKMVVPSSLSENLEVEQFQPTTSARHSVFGEGEVQRQPFKGLIRSLQQTGCMHVLDLYCRGLTSREGCFQYDPEFIELQYEAAWRAGKWDFSLLYPQTHCQPLQHAKNNNYHESLHCCLRALQEGDYDGFYGKLKDTKKELVLSISRASEESTEFIYSTVVKLQILHHLGLVWDLRWTTSSHQSVHGYLVKQMACVDPVIPTMDQLSWLNKDWNSIITQTQLHMTLLEPFIAFRRVLLQILGCEKCTMQHLLQSASLLRKGTRFSHAAASLHEFKFLCARSNGQQPVPDWLGKLEEAKLLHAQGRHEVSISLANYILHNYQLKEEASDIYRVIGKWLAETRSSNSRTILEKYLRPAVSLAEEQSSKICKRLVDRQSQTWFHLAHYADALFKSYEERLSSSEWQAALRLRKHKTKELEVFIKRFKSSKKAEQSDYSLKIQDLQKQLTMDKEEAEKLQVDRDNFLKLALEGYKRCLEIGDKYDVRVVFRQVSMWFSLASQKNVIDNMLSTIKEVQSYKFIPLVYQIASRLGSSKDESGSNSFQSALVSLIRKMAIDHPYHTILQLLALANGDRIKDNQRSRNSFVVDMDKKLAAEHLLQDVSHYHGPMIRQMKQLVDIYIKLAELETRREDTNRKVALPREIRSVKQLELVPVVTATIPVDRSCQYNEGSFPFFRGLSDSVTVMNGINAPKVVECFGSDGQKYKQLAKSGNDDLRQDAVMEQFFGLVNTFLHNNRDTWKRRLAVRTYKVIPFTPSAGVLEWVDGTIPLGDYLIGSSRSEGAHGRYGIGNWKYPKCREHMSSAKDKRKAFVDVCTNFRPVMHYFFLEKFLQPADWFVKRLAYTRSVAASSMVGYIVGLGDRHAMNILIDQATAEVVHIDLGVAFEQGLMLKTPERVPFRLTRDIIDGMGITGVEGVFRRCCEETLSVMRTNKEALLTIVEVFIHDPLYKWALSPLKALQRQKETEDYDGMNLEGLQEEFEGNKDATRALMRVKQKLDGYEGGEMRSIHGQAQQLIQDAIDTDRLSHMFPGWGAWM</sequence>
<keyword id="KW-0067">ATP-binding</keyword>
<keyword id="KW-0131">Cell cycle</keyword>
<keyword id="KW-0227">DNA damage</keyword>
<keyword id="KW-0238">DNA-binding</keyword>
<keyword id="KW-0418">Kinase</keyword>
<keyword id="KW-0469">Meiosis</keyword>
<keyword id="KW-0547">Nucleotide-binding</keyword>
<keyword id="KW-0539">Nucleus</keyword>
<keyword id="KW-1185">Reference proteome</keyword>
<keyword id="KW-0723">Serine/threonine-protein kinase</keyword>
<keyword id="KW-0808">Transferase</keyword>